<organism>
    <name type="scientific">Shewanella halifaxensis (strain HAW-EB4)</name>
    <dbReference type="NCBI Taxonomy" id="458817"/>
    <lineage>
        <taxon>Bacteria</taxon>
        <taxon>Pseudomonadati</taxon>
        <taxon>Pseudomonadota</taxon>
        <taxon>Gammaproteobacteria</taxon>
        <taxon>Alteromonadales</taxon>
        <taxon>Shewanellaceae</taxon>
        <taxon>Shewanella</taxon>
    </lineage>
</organism>
<comment type="function">
    <text evidence="1">One of two assembly initiator proteins, it binds directly to the 5'-end of the 23S rRNA, where it nucleates assembly of the 50S subunit.</text>
</comment>
<comment type="function">
    <text evidence="1">One of the proteins that surrounds the polypeptide exit tunnel on the outside of the subunit.</text>
</comment>
<comment type="subunit">
    <text evidence="1">Part of the 50S ribosomal subunit.</text>
</comment>
<comment type="similarity">
    <text evidence="1">Belongs to the universal ribosomal protein uL24 family.</text>
</comment>
<sequence>MAAKIRRQDEVIVLAGKDQGKRGKVSQVLPTGKLIVEGLNLVKKHQKPNPQLGVAGGIVEQEAPIQASNVAIFNSATGKADRVGFRFEDGKKVRFFKSNSELVK</sequence>
<dbReference type="EMBL" id="CP000931">
    <property type="protein sequence ID" value="ABZ78663.1"/>
    <property type="molecule type" value="Genomic_DNA"/>
</dbReference>
<dbReference type="RefSeq" id="WP_012279173.1">
    <property type="nucleotide sequence ID" value="NC_010334.1"/>
</dbReference>
<dbReference type="SMR" id="B0TM01"/>
<dbReference type="STRING" id="458817.Shal_4123"/>
<dbReference type="KEGG" id="shl:Shal_4123"/>
<dbReference type="eggNOG" id="COG0198">
    <property type="taxonomic scope" value="Bacteria"/>
</dbReference>
<dbReference type="HOGENOM" id="CLU_093315_2_2_6"/>
<dbReference type="OrthoDB" id="9807419at2"/>
<dbReference type="Proteomes" id="UP000001317">
    <property type="component" value="Chromosome"/>
</dbReference>
<dbReference type="GO" id="GO:1990904">
    <property type="term" value="C:ribonucleoprotein complex"/>
    <property type="evidence" value="ECO:0007669"/>
    <property type="project" value="UniProtKB-KW"/>
</dbReference>
<dbReference type="GO" id="GO:0005840">
    <property type="term" value="C:ribosome"/>
    <property type="evidence" value="ECO:0007669"/>
    <property type="project" value="UniProtKB-KW"/>
</dbReference>
<dbReference type="GO" id="GO:0019843">
    <property type="term" value="F:rRNA binding"/>
    <property type="evidence" value="ECO:0007669"/>
    <property type="project" value="UniProtKB-UniRule"/>
</dbReference>
<dbReference type="GO" id="GO:0003735">
    <property type="term" value="F:structural constituent of ribosome"/>
    <property type="evidence" value="ECO:0007669"/>
    <property type="project" value="InterPro"/>
</dbReference>
<dbReference type="GO" id="GO:0006412">
    <property type="term" value="P:translation"/>
    <property type="evidence" value="ECO:0007669"/>
    <property type="project" value="UniProtKB-UniRule"/>
</dbReference>
<dbReference type="CDD" id="cd06089">
    <property type="entry name" value="KOW_RPL26"/>
    <property type="match status" value="1"/>
</dbReference>
<dbReference type="FunFam" id="2.30.30.30:FF:000004">
    <property type="entry name" value="50S ribosomal protein L24"/>
    <property type="match status" value="1"/>
</dbReference>
<dbReference type="Gene3D" id="2.30.30.30">
    <property type="match status" value="1"/>
</dbReference>
<dbReference type="HAMAP" id="MF_01326_B">
    <property type="entry name" value="Ribosomal_uL24_B"/>
    <property type="match status" value="1"/>
</dbReference>
<dbReference type="InterPro" id="IPR005824">
    <property type="entry name" value="KOW"/>
</dbReference>
<dbReference type="InterPro" id="IPR014722">
    <property type="entry name" value="Rib_uL2_dom2"/>
</dbReference>
<dbReference type="InterPro" id="IPR003256">
    <property type="entry name" value="Ribosomal_uL24"/>
</dbReference>
<dbReference type="InterPro" id="IPR041988">
    <property type="entry name" value="Ribosomal_uL24_KOW"/>
</dbReference>
<dbReference type="InterPro" id="IPR008991">
    <property type="entry name" value="Translation_prot_SH3-like_sf"/>
</dbReference>
<dbReference type="NCBIfam" id="TIGR01079">
    <property type="entry name" value="rplX_bact"/>
    <property type="match status" value="1"/>
</dbReference>
<dbReference type="PANTHER" id="PTHR12903">
    <property type="entry name" value="MITOCHONDRIAL RIBOSOMAL PROTEIN L24"/>
    <property type="match status" value="1"/>
</dbReference>
<dbReference type="Pfam" id="PF00467">
    <property type="entry name" value="KOW"/>
    <property type="match status" value="1"/>
</dbReference>
<dbReference type="Pfam" id="PF17136">
    <property type="entry name" value="ribosomal_L24"/>
    <property type="match status" value="1"/>
</dbReference>
<dbReference type="SMART" id="SM00739">
    <property type="entry name" value="KOW"/>
    <property type="match status" value="1"/>
</dbReference>
<dbReference type="SUPFAM" id="SSF50104">
    <property type="entry name" value="Translation proteins SH3-like domain"/>
    <property type="match status" value="1"/>
</dbReference>
<proteinExistence type="inferred from homology"/>
<name>RL24_SHEHH</name>
<evidence type="ECO:0000255" key="1">
    <source>
        <dbReference type="HAMAP-Rule" id="MF_01326"/>
    </source>
</evidence>
<evidence type="ECO:0000305" key="2"/>
<protein>
    <recommendedName>
        <fullName evidence="1">Large ribosomal subunit protein uL24</fullName>
    </recommendedName>
    <alternativeName>
        <fullName evidence="2">50S ribosomal protein L24</fullName>
    </alternativeName>
</protein>
<accession>B0TM01</accession>
<keyword id="KW-0687">Ribonucleoprotein</keyword>
<keyword id="KW-0689">Ribosomal protein</keyword>
<keyword id="KW-0694">RNA-binding</keyword>
<keyword id="KW-0699">rRNA-binding</keyword>
<feature type="chain" id="PRO_1000086494" description="Large ribosomal subunit protein uL24">
    <location>
        <begin position="1"/>
        <end position="104"/>
    </location>
</feature>
<reference key="1">
    <citation type="submission" date="2008-01" db="EMBL/GenBank/DDBJ databases">
        <title>Complete sequence of Shewanella halifaxensis HAW-EB4.</title>
        <authorList>
            <consortium name="US DOE Joint Genome Institute"/>
            <person name="Copeland A."/>
            <person name="Lucas S."/>
            <person name="Lapidus A."/>
            <person name="Glavina del Rio T."/>
            <person name="Dalin E."/>
            <person name="Tice H."/>
            <person name="Bruce D."/>
            <person name="Goodwin L."/>
            <person name="Pitluck S."/>
            <person name="Sims D."/>
            <person name="Brettin T."/>
            <person name="Detter J.C."/>
            <person name="Han C."/>
            <person name="Kuske C.R."/>
            <person name="Schmutz J."/>
            <person name="Larimer F."/>
            <person name="Land M."/>
            <person name="Hauser L."/>
            <person name="Kyrpides N."/>
            <person name="Kim E."/>
            <person name="Zhao J.-S."/>
            <person name="Richardson P."/>
        </authorList>
    </citation>
    <scope>NUCLEOTIDE SEQUENCE [LARGE SCALE GENOMIC DNA]</scope>
    <source>
        <strain>HAW-EB4</strain>
    </source>
</reference>
<gene>
    <name evidence="1" type="primary">rplX</name>
    <name type="ordered locus">Shal_4123</name>
</gene>